<keyword id="KW-0687">Ribonucleoprotein</keyword>
<keyword id="KW-0689">Ribosomal protein</keyword>
<dbReference type="EMBL" id="CP000488">
    <property type="protein sequence ID" value="ABL01975.1"/>
    <property type="molecule type" value="Genomic_DNA"/>
</dbReference>
<dbReference type="RefSeq" id="WP_011737601.1">
    <property type="nucleotide sequence ID" value="NC_008610.1"/>
</dbReference>
<dbReference type="SMR" id="A1AVL8"/>
<dbReference type="STRING" id="413404.Rmag_0183"/>
<dbReference type="KEGG" id="rma:Rmag_0183"/>
<dbReference type="eggNOG" id="COG1841">
    <property type="taxonomic scope" value="Bacteria"/>
</dbReference>
<dbReference type="HOGENOM" id="CLU_131047_1_0_6"/>
<dbReference type="OrthoDB" id="9812790at2"/>
<dbReference type="Proteomes" id="UP000002587">
    <property type="component" value="Chromosome"/>
</dbReference>
<dbReference type="GO" id="GO:0022625">
    <property type="term" value="C:cytosolic large ribosomal subunit"/>
    <property type="evidence" value="ECO:0007669"/>
    <property type="project" value="TreeGrafter"/>
</dbReference>
<dbReference type="GO" id="GO:0003735">
    <property type="term" value="F:structural constituent of ribosome"/>
    <property type="evidence" value="ECO:0007669"/>
    <property type="project" value="InterPro"/>
</dbReference>
<dbReference type="GO" id="GO:0006412">
    <property type="term" value="P:translation"/>
    <property type="evidence" value="ECO:0007669"/>
    <property type="project" value="UniProtKB-UniRule"/>
</dbReference>
<dbReference type="CDD" id="cd01658">
    <property type="entry name" value="Ribosomal_L30"/>
    <property type="match status" value="1"/>
</dbReference>
<dbReference type="FunFam" id="3.30.1390.20:FF:000001">
    <property type="entry name" value="50S ribosomal protein L30"/>
    <property type="match status" value="1"/>
</dbReference>
<dbReference type="Gene3D" id="3.30.1390.20">
    <property type="entry name" value="Ribosomal protein L30, ferredoxin-like fold domain"/>
    <property type="match status" value="1"/>
</dbReference>
<dbReference type="HAMAP" id="MF_01371_B">
    <property type="entry name" value="Ribosomal_uL30_B"/>
    <property type="match status" value="1"/>
</dbReference>
<dbReference type="InterPro" id="IPR036919">
    <property type="entry name" value="Ribo_uL30_ferredoxin-like_sf"/>
</dbReference>
<dbReference type="InterPro" id="IPR005996">
    <property type="entry name" value="Ribosomal_uL30_bac-type"/>
</dbReference>
<dbReference type="InterPro" id="IPR016082">
    <property type="entry name" value="Ribosomal_uL30_ferredoxin-like"/>
</dbReference>
<dbReference type="NCBIfam" id="TIGR01308">
    <property type="entry name" value="rpmD_bact"/>
    <property type="match status" value="1"/>
</dbReference>
<dbReference type="PANTHER" id="PTHR15892:SF2">
    <property type="entry name" value="LARGE RIBOSOMAL SUBUNIT PROTEIN UL30M"/>
    <property type="match status" value="1"/>
</dbReference>
<dbReference type="PANTHER" id="PTHR15892">
    <property type="entry name" value="MITOCHONDRIAL RIBOSOMAL PROTEIN L30"/>
    <property type="match status" value="1"/>
</dbReference>
<dbReference type="Pfam" id="PF00327">
    <property type="entry name" value="Ribosomal_L30"/>
    <property type="match status" value="1"/>
</dbReference>
<dbReference type="SUPFAM" id="SSF55129">
    <property type="entry name" value="Ribosomal protein L30p/L7e"/>
    <property type="match status" value="1"/>
</dbReference>
<protein>
    <recommendedName>
        <fullName evidence="1">Large ribosomal subunit protein uL30</fullName>
    </recommendedName>
    <alternativeName>
        <fullName evidence="2">50S ribosomal protein L30</fullName>
    </alternativeName>
</protein>
<accession>A1AVL8</accession>
<name>RL30_RUTMC</name>
<evidence type="ECO:0000255" key="1">
    <source>
        <dbReference type="HAMAP-Rule" id="MF_01371"/>
    </source>
</evidence>
<evidence type="ECO:0000305" key="2"/>
<feature type="chain" id="PRO_0000347141" description="Large ribosomal subunit protein uL30">
    <location>
        <begin position="1"/>
        <end position="106"/>
    </location>
</feature>
<proteinExistence type="inferred from homology"/>
<gene>
    <name evidence="1" type="primary">rpmD</name>
    <name type="ordered locus">Rmag_0183</name>
</gene>
<comment type="subunit">
    <text evidence="1">Part of the 50S ribosomal subunit.</text>
</comment>
<comment type="similarity">
    <text evidence="1">Belongs to the universal ribosomal protein uL30 family.</text>
</comment>
<sequence length="106" mass="11924">MVEENKIVKKVIVTKKPTIKKAPVKAAFKKEVVVKNATVIKKTQTSSKRNTVNITLVKSFHGRLPSHRATIVGLGLKRINHIKELKDTPEIRGMINKVAYLLKVED</sequence>
<reference key="1">
    <citation type="journal article" date="2007" name="Science">
        <title>The Calyptogena magnifica chemoautotrophic symbiont genome.</title>
        <authorList>
            <person name="Newton I.L.G."/>
            <person name="Woyke T."/>
            <person name="Auchtung T.A."/>
            <person name="Dilly G.F."/>
            <person name="Dutton R.J."/>
            <person name="Fisher M.C."/>
            <person name="Fontanez K.M."/>
            <person name="Lau E."/>
            <person name="Stewart F.J."/>
            <person name="Richardson P.M."/>
            <person name="Barry K.W."/>
            <person name="Saunders E."/>
            <person name="Detter J.C."/>
            <person name="Wu D."/>
            <person name="Eisen J.A."/>
            <person name="Cavanaugh C.M."/>
        </authorList>
    </citation>
    <scope>NUCLEOTIDE SEQUENCE [LARGE SCALE GENOMIC DNA]</scope>
</reference>
<organism>
    <name type="scientific">Ruthia magnifica subsp. Calyptogena magnifica</name>
    <dbReference type="NCBI Taxonomy" id="413404"/>
    <lineage>
        <taxon>Bacteria</taxon>
        <taxon>Pseudomonadati</taxon>
        <taxon>Pseudomonadota</taxon>
        <taxon>Gammaproteobacteria</taxon>
        <taxon>Candidatus Pseudothioglobaceae</taxon>
        <taxon>Candidatus Ruthturnera</taxon>
    </lineage>
</organism>